<proteinExistence type="inferred from homology"/>
<protein>
    <recommendedName>
        <fullName evidence="1">3-isopropylmalate dehydratase large subunit</fullName>
        <ecNumber evidence="1">4.2.1.33</ecNumber>
    </recommendedName>
    <alternativeName>
        <fullName evidence="1">Alpha-IPM isomerase</fullName>
        <shortName evidence="1">IPMI</shortName>
    </alternativeName>
    <alternativeName>
        <fullName evidence="1">Isopropylmalate isomerase</fullName>
    </alternativeName>
</protein>
<organism>
    <name type="scientific">Bacillus pumilus (strain SAFR-032)</name>
    <dbReference type="NCBI Taxonomy" id="315750"/>
    <lineage>
        <taxon>Bacteria</taxon>
        <taxon>Bacillati</taxon>
        <taxon>Bacillota</taxon>
        <taxon>Bacilli</taxon>
        <taxon>Bacillales</taxon>
        <taxon>Bacillaceae</taxon>
        <taxon>Bacillus</taxon>
    </lineage>
</organism>
<accession>A8FFW3</accession>
<gene>
    <name evidence="1" type="primary">leuC</name>
    <name type="ordered locus">BPUM_2467</name>
</gene>
<name>LEUC_BACP2</name>
<evidence type="ECO:0000255" key="1">
    <source>
        <dbReference type="HAMAP-Rule" id="MF_01026"/>
    </source>
</evidence>
<dbReference type="EC" id="4.2.1.33" evidence="1"/>
<dbReference type="EMBL" id="CP000813">
    <property type="protein sequence ID" value="ABV63130.1"/>
    <property type="molecule type" value="Genomic_DNA"/>
</dbReference>
<dbReference type="RefSeq" id="WP_012010788.1">
    <property type="nucleotide sequence ID" value="NZ_VEIS01000010.1"/>
</dbReference>
<dbReference type="SMR" id="A8FFW3"/>
<dbReference type="STRING" id="315750.BPUM_2467"/>
<dbReference type="GeneID" id="5621731"/>
<dbReference type="KEGG" id="bpu:BPUM_2467"/>
<dbReference type="eggNOG" id="COG0065">
    <property type="taxonomic scope" value="Bacteria"/>
</dbReference>
<dbReference type="HOGENOM" id="CLU_006714_3_4_9"/>
<dbReference type="OrthoDB" id="9802769at2"/>
<dbReference type="UniPathway" id="UPA00048">
    <property type="reaction ID" value="UER00071"/>
</dbReference>
<dbReference type="Proteomes" id="UP000001355">
    <property type="component" value="Chromosome"/>
</dbReference>
<dbReference type="GO" id="GO:0003861">
    <property type="term" value="F:3-isopropylmalate dehydratase activity"/>
    <property type="evidence" value="ECO:0007669"/>
    <property type="project" value="UniProtKB-UniRule"/>
</dbReference>
<dbReference type="GO" id="GO:0051539">
    <property type="term" value="F:4 iron, 4 sulfur cluster binding"/>
    <property type="evidence" value="ECO:0007669"/>
    <property type="project" value="UniProtKB-KW"/>
</dbReference>
<dbReference type="GO" id="GO:0046872">
    <property type="term" value="F:metal ion binding"/>
    <property type="evidence" value="ECO:0007669"/>
    <property type="project" value="UniProtKB-KW"/>
</dbReference>
<dbReference type="GO" id="GO:0009098">
    <property type="term" value="P:L-leucine biosynthetic process"/>
    <property type="evidence" value="ECO:0007669"/>
    <property type="project" value="UniProtKB-UniRule"/>
</dbReference>
<dbReference type="CDD" id="cd01583">
    <property type="entry name" value="IPMI"/>
    <property type="match status" value="1"/>
</dbReference>
<dbReference type="FunFam" id="3.30.499.10:FF:000007">
    <property type="entry name" value="3-isopropylmalate dehydratase large subunit"/>
    <property type="match status" value="1"/>
</dbReference>
<dbReference type="Gene3D" id="3.30.499.10">
    <property type="entry name" value="Aconitase, domain 3"/>
    <property type="match status" value="2"/>
</dbReference>
<dbReference type="HAMAP" id="MF_01026">
    <property type="entry name" value="LeuC_type1"/>
    <property type="match status" value="1"/>
</dbReference>
<dbReference type="InterPro" id="IPR004430">
    <property type="entry name" value="3-IsopropMal_deHydase_lsu"/>
</dbReference>
<dbReference type="InterPro" id="IPR015931">
    <property type="entry name" value="Acnase/IPM_dHydase_lsu_aba_1/3"/>
</dbReference>
<dbReference type="InterPro" id="IPR001030">
    <property type="entry name" value="Acoase/IPM_deHydtase_lsu_aba"/>
</dbReference>
<dbReference type="InterPro" id="IPR018136">
    <property type="entry name" value="Aconitase_4Fe-4S_BS"/>
</dbReference>
<dbReference type="InterPro" id="IPR036008">
    <property type="entry name" value="Aconitase_4Fe-4S_dom"/>
</dbReference>
<dbReference type="InterPro" id="IPR050067">
    <property type="entry name" value="IPM_dehydratase_rel_enz"/>
</dbReference>
<dbReference type="InterPro" id="IPR033941">
    <property type="entry name" value="IPMI_cat"/>
</dbReference>
<dbReference type="NCBIfam" id="TIGR00170">
    <property type="entry name" value="leuC"/>
    <property type="match status" value="1"/>
</dbReference>
<dbReference type="NCBIfam" id="NF004016">
    <property type="entry name" value="PRK05478.1"/>
    <property type="match status" value="1"/>
</dbReference>
<dbReference type="NCBIfam" id="NF009116">
    <property type="entry name" value="PRK12466.1"/>
    <property type="match status" value="1"/>
</dbReference>
<dbReference type="PANTHER" id="PTHR43822:SF9">
    <property type="entry name" value="3-ISOPROPYLMALATE DEHYDRATASE"/>
    <property type="match status" value="1"/>
</dbReference>
<dbReference type="PANTHER" id="PTHR43822">
    <property type="entry name" value="HOMOACONITASE, MITOCHONDRIAL-RELATED"/>
    <property type="match status" value="1"/>
</dbReference>
<dbReference type="Pfam" id="PF00330">
    <property type="entry name" value="Aconitase"/>
    <property type="match status" value="1"/>
</dbReference>
<dbReference type="PRINTS" id="PR00415">
    <property type="entry name" value="ACONITASE"/>
</dbReference>
<dbReference type="SUPFAM" id="SSF53732">
    <property type="entry name" value="Aconitase iron-sulfur domain"/>
    <property type="match status" value="1"/>
</dbReference>
<dbReference type="PROSITE" id="PS00450">
    <property type="entry name" value="ACONITASE_1"/>
    <property type="match status" value="1"/>
</dbReference>
<keyword id="KW-0004">4Fe-4S</keyword>
<keyword id="KW-0028">Amino-acid biosynthesis</keyword>
<keyword id="KW-0100">Branched-chain amino acid biosynthesis</keyword>
<keyword id="KW-0408">Iron</keyword>
<keyword id="KW-0411">Iron-sulfur</keyword>
<keyword id="KW-0432">Leucine biosynthesis</keyword>
<keyword id="KW-0456">Lyase</keyword>
<keyword id="KW-0479">Metal-binding</keyword>
<feature type="chain" id="PRO_0000319810" description="3-isopropylmalate dehydratase large subunit">
    <location>
        <begin position="1"/>
        <end position="471"/>
    </location>
</feature>
<feature type="binding site" evidence="1">
    <location>
        <position position="346"/>
    </location>
    <ligand>
        <name>[4Fe-4S] cluster</name>
        <dbReference type="ChEBI" id="CHEBI:49883"/>
    </ligand>
</feature>
<feature type="binding site" evidence="1">
    <location>
        <position position="406"/>
    </location>
    <ligand>
        <name>[4Fe-4S] cluster</name>
        <dbReference type="ChEBI" id="CHEBI:49883"/>
    </ligand>
</feature>
<feature type="binding site" evidence="1">
    <location>
        <position position="409"/>
    </location>
    <ligand>
        <name>[4Fe-4S] cluster</name>
        <dbReference type="ChEBI" id="CHEBI:49883"/>
    </ligand>
</feature>
<comment type="function">
    <text evidence="1">Catalyzes the isomerization between 2-isopropylmalate and 3-isopropylmalate, via the formation of 2-isopropylmaleate.</text>
</comment>
<comment type="catalytic activity">
    <reaction evidence="1">
        <text>(2R,3S)-3-isopropylmalate = (2S)-2-isopropylmalate</text>
        <dbReference type="Rhea" id="RHEA:32287"/>
        <dbReference type="ChEBI" id="CHEBI:1178"/>
        <dbReference type="ChEBI" id="CHEBI:35121"/>
        <dbReference type="EC" id="4.2.1.33"/>
    </reaction>
</comment>
<comment type="cofactor">
    <cofactor evidence="1">
        <name>[4Fe-4S] cluster</name>
        <dbReference type="ChEBI" id="CHEBI:49883"/>
    </cofactor>
    <text evidence="1">Binds 1 [4Fe-4S] cluster per subunit.</text>
</comment>
<comment type="pathway">
    <text evidence="1">Amino-acid biosynthesis; L-leucine biosynthesis; L-leucine from 3-methyl-2-oxobutanoate: step 2/4.</text>
</comment>
<comment type="subunit">
    <text evidence="1">Heterodimer of LeuC and LeuD.</text>
</comment>
<comment type="similarity">
    <text evidence="1">Belongs to the aconitase/IPM isomerase family. LeuC type 1 subfamily.</text>
</comment>
<reference key="1">
    <citation type="journal article" date="2007" name="PLoS ONE">
        <title>Paradoxical DNA repair and peroxide resistance gene conservation in Bacillus pumilus SAFR-032.</title>
        <authorList>
            <person name="Gioia J."/>
            <person name="Yerrapragada S."/>
            <person name="Qin X."/>
            <person name="Jiang H."/>
            <person name="Igboeli O.C."/>
            <person name="Muzny D."/>
            <person name="Dugan-Rocha S."/>
            <person name="Ding Y."/>
            <person name="Hawes A."/>
            <person name="Liu W."/>
            <person name="Perez L."/>
            <person name="Kovar C."/>
            <person name="Dinh H."/>
            <person name="Lee S."/>
            <person name="Nazareth L."/>
            <person name="Blyth P."/>
            <person name="Holder M."/>
            <person name="Buhay C."/>
            <person name="Tirumalai M.R."/>
            <person name="Liu Y."/>
            <person name="Dasgupta I."/>
            <person name="Bokhetache L."/>
            <person name="Fujita M."/>
            <person name="Karouia F."/>
            <person name="Eswara Moorthy P."/>
            <person name="Siefert J."/>
            <person name="Uzman A."/>
            <person name="Buzumbo P."/>
            <person name="Verma A."/>
            <person name="Zwiya H."/>
            <person name="McWilliams B.D."/>
            <person name="Olowu A."/>
            <person name="Clinkenbeard K.D."/>
            <person name="Newcombe D."/>
            <person name="Golebiewski L."/>
            <person name="Petrosino J.F."/>
            <person name="Nicholson W.L."/>
            <person name="Fox G.E."/>
            <person name="Venkateswaran K."/>
            <person name="Highlander S.K."/>
            <person name="Weinstock G.M."/>
        </authorList>
    </citation>
    <scope>NUCLEOTIDE SEQUENCE [LARGE SCALE GENOMIC DNA]</scope>
    <source>
        <strain>SAFR-032</strain>
    </source>
</reference>
<sequence length="471" mass="51989">MPRTIIEKIWDQHVVKSGEGKPDLLYIDLHLVHEVTSPQAFEGLRQKGRKVRRPQNTFATMDHNIPTVNRFVIKDEIAKKQVGALERNCAEFGVRLADLHSVDQGIVHVVGPELGLTLPGKTIVCGDSHTSTHGAFGALAFGIGTSEVEHVLSTQTLWQQRPKTLEIRVDGKLQKGVTAKDVILAVIGAHGVKFGSGYVIEYTGEVFRNMTMDERMTVCNMSIEAGARAGLIAPDEVTFEYCRGRKYAPQGEDFEAAIKEWEELKTDPGATYDKTIVLDGNEISPMVTWGINPGMVLPVDASIPGPEDFAQEDDQKEAIRAYEYMGVHPHQRIEDITIEHVFIGSCTNSRMTDLRQAASMIEGQKVADHVRAIVVPGSQSVKLQAEEEGLHKIFLEAGFEWRESGCSMCLSMNNDVVPEGERCASTSNRNFEGRQGKGARTHLVSPAMAAMAAIHGRFVDVRKFNQEKTVV</sequence>